<reference key="1">
    <citation type="journal article" date="2003" name="Biochim. Biophys. Acta">
        <title>Roc, a Ras/GTPase domain in complex proteins.</title>
        <authorList>
            <person name="Bosgraaf L."/>
            <person name="van Haastert P.J.M."/>
        </authorList>
    </citation>
    <scope>NUCLEOTIDE SEQUENCE [GENOMIC DNA]</scope>
</reference>
<reference key="2">
    <citation type="journal article" date="2005" name="Nature">
        <title>The genome of the social amoeba Dictyostelium discoideum.</title>
        <authorList>
            <person name="Eichinger L."/>
            <person name="Pachebat J.A."/>
            <person name="Gloeckner G."/>
            <person name="Rajandream M.A."/>
            <person name="Sucgang R."/>
            <person name="Berriman M."/>
            <person name="Song J."/>
            <person name="Olsen R."/>
            <person name="Szafranski K."/>
            <person name="Xu Q."/>
            <person name="Tunggal B."/>
            <person name="Kummerfeld S."/>
            <person name="Madera M."/>
            <person name="Konfortov B.A."/>
            <person name="Rivero F."/>
            <person name="Bankier A.T."/>
            <person name="Lehmann R."/>
            <person name="Hamlin N."/>
            <person name="Davies R."/>
            <person name="Gaudet P."/>
            <person name="Fey P."/>
            <person name="Pilcher K."/>
            <person name="Chen G."/>
            <person name="Saunders D."/>
            <person name="Sodergren E.J."/>
            <person name="Davis P."/>
            <person name="Kerhornou A."/>
            <person name="Nie X."/>
            <person name="Hall N."/>
            <person name="Anjard C."/>
            <person name="Hemphill L."/>
            <person name="Bason N."/>
            <person name="Farbrother P."/>
            <person name="Desany B."/>
            <person name="Just E."/>
            <person name="Morio T."/>
            <person name="Rost R."/>
            <person name="Churcher C.M."/>
            <person name="Cooper J."/>
            <person name="Haydock S."/>
            <person name="van Driessche N."/>
            <person name="Cronin A."/>
            <person name="Goodhead I."/>
            <person name="Muzny D.M."/>
            <person name="Mourier T."/>
            <person name="Pain A."/>
            <person name="Lu M."/>
            <person name="Harper D."/>
            <person name="Lindsay R."/>
            <person name="Hauser H."/>
            <person name="James K.D."/>
            <person name="Quiles M."/>
            <person name="Madan Babu M."/>
            <person name="Saito T."/>
            <person name="Buchrieser C."/>
            <person name="Wardroper A."/>
            <person name="Felder M."/>
            <person name="Thangavelu M."/>
            <person name="Johnson D."/>
            <person name="Knights A."/>
            <person name="Loulseged H."/>
            <person name="Mungall K.L."/>
            <person name="Oliver K."/>
            <person name="Price C."/>
            <person name="Quail M.A."/>
            <person name="Urushihara H."/>
            <person name="Hernandez J."/>
            <person name="Rabbinowitsch E."/>
            <person name="Steffen D."/>
            <person name="Sanders M."/>
            <person name="Ma J."/>
            <person name="Kohara Y."/>
            <person name="Sharp S."/>
            <person name="Simmonds M.N."/>
            <person name="Spiegler S."/>
            <person name="Tivey A."/>
            <person name="Sugano S."/>
            <person name="White B."/>
            <person name="Walker D."/>
            <person name="Woodward J.R."/>
            <person name="Winckler T."/>
            <person name="Tanaka Y."/>
            <person name="Shaulsky G."/>
            <person name="Schleicher M."/>
            <person name="Weinstock G.M."/>
            <person name="Rosenthal A."/>
            <person name="Cox E.C."/>
            <person name="Chisholm R.L."/>
            <person name="Gibbs R.A."/>
            <person name="Loomis W.F."/>
            <person name="Platzer M."/>
            <person name="Kay R.R."/>
            <person name="Williams J.G."/>
            <person name="Dear P.H."/>
            <person name="Noegel A.A."/>
            <person name="Barrell B.G."/>
            <person name="Kuspa A."/>
        </authorList>
    </citation>
    <scope>NUCLEOTIDE SEQUENCE [LARGE SCALE GENOMIC DNA]</scope>
    <source>
        <strain>AX4</strain>
    </source>
</reference>
<accession>Q6XHB2</accession>
<accession>Q54J79</accession>
<protein>
    <recommendedName>
        <fullName>Probable serine/threonine-protein kinase roco4</fullName>
        <ecNumber>2.7.11.1</ecNumber>
    </recommendedName>
    <alternativeName>
        <fullName>Ras of complex proteins and C-terminal of roc 4</fullName>
    </alternativeName>
</protein>
<sequence>MDSSQQLQESQQLQQQYTRVGIDVIGPMKDLIISVMNSLDTTFKIINETYRIVYFDTDETKLTSSNLDSDDEEFESDDDADEEADLQIQASCNLYTFDGKNRQSVDEIKRIVQHLNETQSQQNDNQAVPVIPTFFVVVNIGVGPSFVSEIKSAAGTTQFIEWIVNDQASKEVFKVSTNLLSHHKKQIELTHACTVGDVNYLDQIILSGVSTDQLKEAHKAGHAIVFDSLLTHNSNSLVVTGTMALLGAIVENGDRKGKRLSLSRSNLSRFPMSITQMCTHLVELDLSDNKITELPKDIQLLKSLRILILRGNLLEDIPLEICYLGDLKILELQENPLNNFPLSVVQSGTKNLLLFCKNILERKKSETWNKVKLMFVGQEGVGKTSLCQALKGSKKKKAELQVTGDTVSTEGVKIQNIKNKKVEFHAWDFGGQQVFYPTHQFFLTTHALYLVVFKLTDPNFAERVNYWVRQVKSNSSGAVPAIFLVGTHSDVCTPEQLQEAESILKANFVKYSRVKENTINFVCCATGKGIKELKKRLIHEAEKSHLIKKDIPGNYMVLEARLTNRGANPGRMAVSGSPIGGGSSAQLSSNAINSQKERYIDYDDYMNECKLSHLQPEEIKGATDFLHNLGIILHFDTPTLKNLVVLDPQWLADVMSSLITFSHNWIKRGILNHSELVAVWGGKYDQSLWPLLLKLLEKFEVSYELPNIAKSLIPSLLPEDAEGEISTIKDREWVTLPQAIESGRCQVFGCDYNFDFMPLGFFARLLLRILLISGVEVRTYWRNGVLLDILTPEQVKLQQSKQQQLQQQQQQQNNNESNDSSVNNNNNNNNNNNNNNIINSSSSSSLNLTQTSTSTSPSKLSLNNSQINNSNSTLNSQQLINPSVSPLSSTTPRHQALITFIKKKSFESKDKDSYKLNIEVRSFNTTIEKDHSASLFFQQILFTIDTLLASSYVGLEITRMIPCIHCVQKNPRADPYYFDFSSCISALQDGKPHLFCRNDPSIPVRIDYIAPDLCLKKVPTLADNEIEYEKQIGKGGFGLVHKGRLVKDKSVVAIKSLILGDSEGETEMIEKFQEFQREVFIMSNLNHPNIVKLYGLMHNPPRMVMEFVPCGDLYHRLLDKAHPIKWSVKLRLMLDIALGIEYMQNQNPPIVHRDLRSPNIFLQSLDENAPVCAKVADFGLSQQSVHSVSGLLGNFQWMAPETIGAEEESYTEKADTYSFAMILYTILTGEGPFDEYSYGKIKFINMIREEGLRPTIPEDCPPRLRNVIELCWSGDPKKRPHFSYIVKELSELRNGNTTSTTTNTSSTTNNLNSANVSIASTSSNADDGSQTNNNNNNNNNNNNNNNNNSGSSIALSPSRSFEQQTTTTTTTTTSPSSPSTSFINSSGSYNTESYSVASSSTTNLLNTLNNANQPVNFIGTASVHKKMEVLAGVEAGETVWTKSADSSLCFWSTKKGHLINELKCPHTVATTMMIKVGKYIWEATNSNGIYIWDMGTMTIVQQLTTPHKGDVCLHFVEYGDNNGVWSGGSEGTVCLWDMQTFEKKHSFSLESAITAMSYFGNNTLYIASGSHIVVFKTKTLLMNVNQNWKHSTGSITSILAMKDEVWSGGSDGRIYIWKVKNEFELQKVQSLEAHHEKITSLIHLEDNVLSGSTDKCISLFKISDPKKPFTTQEHHKQGVTSIVKVQSHIVWAITSDTTTPLVLWNIPQKWEKKTANGILPRLKFFR</sequence>
<comment type="catalytic activity">
    <reaction>
        <text>L-seryl-[protein] + ATP = O-phospho-L-seryl-[protein] + ADP + H(+)</text>
        <dbReference type="Rhea" id="RHEA:17989"/>
        <dbReference type="Rhea" id="RHEA-COMP:9863"/>
        <dbReference type="Rhea" id="RHEA-COMP:11604"/>
        <dbReference type="ChEBI" id="CHEBI:15378"/>
        <dbReference type="ChEBI" id="CHEBI:29999"/>
        <dbReference type="ChEBI" id="CHEBI:30616"/>
        <dbReference type="ChEBI" id="CHEBI:83421"/>
        <dbReference type="ChEBI" id="CHEBI:456216"/>
        <dbReference type="EC" id="2.7.11.1"/>
    </reaction>
</comment>
<comment type="catalytic activity">
    <reaction>
        <text>L-threonyl-[protein] + ATP = O-phospho-L-threonyl-[protein] + ADP + H(+)</text>
        <dbReference type="Rhea" id="RHEA:46608"/>
        <dbReference type="Rhea" id="RHEA-COMP:11060"/>
        <dbReference type="Rhea" id="RHEA-COMP:11605"/>
        <dbReference type="ChEBI" id="CHEBI:15378"/>
        <dbReference type="ChEBI" id="CHEBI:30013"/>
        <dbReference type="ChEBI" id="CHEBI:30616"/>
        <dbReference type="ChEBI" id="CHEBI:61977"/>
        <dbReference type="ChEBI" id="CHEBI:456216"/>
        <dbReference type="EC" id="2.7.11.1"/>
    </reaction>
</comment>
<comment type="similarity">
    <text evidence="5">Belongs to the protein kinase superfamily. TKL Ser/Thr protein kinase family. ROCO subfamily.</text>
</comment>
<name>ROCO4_DICDI</name>
<dbReference type="EC" id="2.7.11.1"/>
<dbReference type="EMBL" id="AY232266">
    <property type="protein sequence ID" value="AAO83649.1"/>
    <property type="molecule type" value="Genomic_DNA"/>
</dbReference>
<dbReference type="EMBL" id="AAFI02000109">
    <property type="protein sequence ID" value="EAL63307.1"/>
    <property type="molecule type" value="Genomic_DNA"/>
</dbReference>
<dbReference type="RefSeq" id="XP_636808.1">
    <property type="nucleotide sequence ID" value="XM_631716.1"/>
</dbReference>
<dbReference type="PDB" id="4F0F">
    <property type="method" value="X-ray"/>
    <property type="resolution" value="1.80 A"/>
    <property type="chains" value="A=1019-1292"/>
</dbReference>
<dbReference type="PDB" id="4F0G">
    <property type="method" value="X-ray"/>
    <property type="resolution" value="2.00 A"/>
    <property type="chains" value="A=1019-1292"/>
</dbReference>
<dbReference type="PDB" id="4F1M">
    <property type="method" value="X-ray"/>
    <property type="resolution" value="2.04 A"/>
    <property type="chains" value="A=1019-1292"/>
</dbReference>
<dbReference type="PDB" id="4F1O">
    <property type="method" value="X-ray"/>
    <property type="resolution" value="2.30 A"/>
    <property type="chains" value="A=1019-1292"/>
</dbReference>
<dbReference type="PDB" id="4F1T">
    <property type="method" value="X-ray"/>
    <property type="resolution" value="2.30 A"/>
    <property type="chains" value="A=1019-1292"/>
</dbReference>
<dbReference type="PDB" id="4YZM">
    <property type="method" value="X-ray"/>
    <property type="resolution" value="3.00 A"/>
    <property type="chains" value="A/B=1019-1292"/>
</dbReference>
<dbReference type="PDB" id="4YZN">
    <property type="method" value="X-ray"/>
    <property type="resolution" value="1.55 A"/>
    <property type="chains" value="A=1019-1292"/>
</dbReference>
<dbReference type="PDBsum" id="4F0F"/>
<dbReference type="PDBsum" id="4F0G"/>
<dbReference type="PDBsum" id="4F1M"/>
<dbReference type="PDBsum" id="4F1O"/>
<dbReference type="PDBsum" id="4F1T"/>
<dbReference type="PDBsum" id="4YZM"/>
<dbReference type="PDBsum" id="4YZN"/>
<dbReference type="SMR" id="Q6XHB2"/>
<dbReference type="FunCoup" id="Q6XHB2">
    <property type="interactions" value="67"/>
</dbReference>
<dbReference type="STRING" id="44689.Q6XHB2"/>
<dbReference type="PaxDb" id="44689-DDB0191509"/>
<dbReference type="EnsemblProtists" id="EAL63307">
    <property type="protein sequence ID" value="EAL63307"/>
    <property type="gene ID" value="DDB_G0288251"/>
</dbReference>
<dbReference type="GeneID" id="8626525"/>
<dbReference type="KEGG" id="ddi:DDB_G0288251"/>
<dbReference type="dictyBase" id="DDB_G0288251">
    <property type="gene designation" value="roco4"/>
</dbReference>
<dbReference type="VEuPathDB" id="AmoebaDB:DDB_G0288251"/>
<dbReference type="eggNOG" id="KOG0192">
    <property type="taxonomic scope" value="Eukaryota"/>
</dbReference>
<dbReference type="HOGENOM" id="CLU_002809_0_0_1"/>
<dbReference type="InParanoid" id="Q6XHB2"/>
<dbReference type="OMA" id="KFQEFQR"/>
<dbReference type="PhylomeDB" id="Q6XHB2"/>
<dbReference type="Reactome" id="R-DDI-5675482">
    <property type="pathway name" value="Regulation of necroptotic cell death"/>
</dbReference>
<dbReference type="EvolutionaryTrace" id="Q6XHB2"/>
<dbReference type="PRO" id="PR:Q6XHB2"/>
<dbReference type="Proteomes" id="UP000002195">
    <property type="component" value="Chromosome 5"/>
</dbReference>
<dbReference type="GO" id="GO:0005737">
    <property type="term" value="C:cytoplasm"/>
    <property type="evidence" value="ECO:0000318"/>
    <property type="project" value="GO_Central"/>
</dbReference>
<dbReference type="GO" id="GO:0005829">
    <property type="term" value="C:cytosol"/>
    <property type="evidence" value="ECO:0000304"/>
    <property type="project" value="dictyBase"/>
</dbReference>
<dbReference type="GO" id="GO:0005739">
    <property type="term" value="C:mitochondrion"/>
    <property type="evidence" value="ECO:0007669"/>
    <property type="project" value="GOC"/>
</dbReference>
<dbReference type="GO" id="GO:0005524">
    <property type="term" value="F:ATP binding"/>
    <property type="evidence" value="ECO:0007669"/>
    <property type="project" value="UniProtKB-KW"/>
</dbReference>
<dbReference type="GO" id="GO:0005525">
    <property type="term" value="F:GTP binding"/>
    <property type="evidence" value="ECO:0007669"/>
    <property type="project" value="UniProtKB-KW"/>
</dbReference>
<dbReference type="GO" id="GO:0004672">
    <property type="term" value="F:protein kinase activity"/>
    <property type="evidence" value="ECO:0000314"/>
    <property type="project" value="dictyBase"/>
</dbReference>
<dbReference type="GO" id="GO:0106310">
    <property type="term" value="F:protein serine kinase activity"/>
    <property type="evidence" value="ECO:0007669"/>
    <property type="project" value="RHEA"/>
</dbReference>
<dbReference type="GO" id="GO:0004674">
    <property type="term" value="F:protein serine/threonine kinase activity"/>
    <property type="evidence" value="ECO:0007669"/>
    <property type="project" value="UniProtKB-KW"/>
</dbReference>
<dbReference type="GO" id="GO:0004713">
    <property type="term" value="F:protein tyrosine kinase activity"/>
    <property type="evidence" value="ECO:0007669"/>
    <property type="project" value="InterPro"/>
</dbReference>
<dbReference type="GO" id="GO:0006120">
    <property type="term" value="P:mitochondrial electron transport, NADH to ubiquinone"/>
    <property type="evidence" value="ECO:0000315"/>
    <property type="project" value="dictyBase"/>
</dbReference>
<dbReference type="GO" id="GO:0042331">
    <property type="term" value="P:phototaxis"/>
    <property type="evidence" value="ECO:0000315"/>
    <property type="project" value="dictyBase"/>
</dbReference>
<dbReference type="GO" id="GO:0000302">
    <property type="term" value="P:response to reactive oxygen species"/>
    <property type="evidence" value="ECO:0000315"/>
    <property type="project" value="dictyBase"/>
</dbReference>
<dbReference type="GO" id="GO:0007165">
    <property type="term" value="P:signal transduction"/>
    <property type="evidence" value="ECO:0000318"/>
    <property type="project" value="GO_Central"/>
</dbReference>
<dbReference type="GO" id="GO:0031150">
    <property type="term" value="P:sorocarp stalk development"/>
    <property type="evidence" value="ECO:0000315"/>
    <property type="project" value="dictyBase"/>
</dbReference>
<dbReference type="CDD" id="cd09914">
    <property type="entry name" value="RocCOR"/>
    <property type="match status" value="1"/>
</dbReference>
<dbReference type="CDD" id="cd13999">
    <property type="entry name" value="STKc_MAP3K-like"/>
    <property type="match status" value="1"/>
</dbReference>
<dbReference type="DisProt" id="DP02686"/>
<dbReference type="FunFam" id="1.10.10.10:FF:001519">
    <property type="entry name" value="Probable serine/threonine-protein kinase roco4"/>
    <property type="match status" value="1"/>
</dbReference>
<dbReference type="FunFam" id="1.10.510.10:FF:001859">
    <property type="entry name" value="Probable serine/threonine-protein kinase roco4"/>
    <property type="match status" value="1"/>
</dbReference>
<dbReference type="FunFam" id="2.130.10.10:FF:003362">
    <property type="entry name" value="Probable serine/threonine-protein kinase roco4"/>
    <property type="match status" value="1"/>
</dbReference>
<dbReference type="FunFam" id="3.30.200.20:FF:000803">
    <property type="entry name" value="Probable serine/threonine-protein kinase roco4"/>
    <property type="match status" value="1"/>
</dbReference>
<dbReference type="FunFam" id="3.30.70.1390:FF:000005">
    <property type="entry name" value="Probable serine/threonine-protein kinase roco4"/>
    <property type="match status" value="1"/>
</dbReference>
<dbReference type="FunFam" id="3.80.10.10:FF:002471">
    <property type="entry name" value="Probable serine/threonine-protein kinase roco4"/>
    <property type="match status" value="1"/>
</dbReference>
<dbReference type="Gene3D" id="3.40.50.300">
    <property type="entry name" value="P-loop containing nucleotide triphosphate hydrolases"/>
    <property type="match status" value="1"/>
</dbReference>
<dbReference type="Gene3D" id="3.30.200.20">
    <property type="entry name" value="Phosphorylase Kinase, domain 1"/>
    <property type="match status" value="1"/>
</dbReference>
<dbReference type="Gene3D" id="3.80.10.10">
    <property type="entry name" value="Ribonuclease Inhibitor"/>
    <property type="match status" value="1"/>
</dbReference>
<dbReference type="Gene3D" id="3.30.70.1390">
    <property type="entry name" value="ROC domain from the Parkinson's disease-associated leucine-rich repeat kinase 2"/>
    <property type="match status" value="1"/>
</dbReference>
<dbReference type="Gene3D" id="1.10.510.10">
    <property type="entry name" value="Transferase(Phosphotransferase) domain 1"/>
    <property type="match status" value="1"/>
</dbReference>
<dbReference type="Gene3D" id="1.10.10.10">
    <property type="entry name" value="Winged helix-like DNA-binding domain superfamily/Winged helix DNA-binding domain"/>
    <property type="match status" value="1"/>
</dbReference>
<dbReference type="Gene3D" id="2.130.10.10">
    <property type="entry name" value="YVTN repeat-like/Quinoprotein amine dehydrogenase"/>
    <property type="match status" value="2"/>
</dbReference>
<dbReference type="InterPro" id="IPR032171">
    <property type="entry name" value="COR-A"/>
</dbReference>
<dbReference type="InterPro" id="IPR011009">
    <property type="entry name" value="Kinase-like_dom_sf"/>
</dbReference>
<dbReference type="InterPro" id="IPR001611">
    <property type="entry name" value="Leu-rich_rpt"/>
</dbReference>
<dbReference type="InterPro" id="IPR003591">
    <property type="entry name" value="Leu-rich_rpt_typical-subtyp"/>
</dbReference>
<dbReference type="InterPro" id="IPR032675">
    <property type="entry name" value="LRR_dom_sf"/>
</dbReference>
<dbReference type="InterPro" id="IPR027417">
    <property type="entry name" value="P-loop_NTPase"/>
</dbReference>
<dbReference type="InterPro" id="IPR000719">
    <property type="entry name" value="Prot_kinase_dom"/>
</dbReference>
<dbReference type="InterPro" id="IPR017441">
    <property type="entry name" value="Protein_kinase_ATP_BS"/>
</dbReference>
<dbReference type="InterPro" id="IPR020859">
    <property type="entry name" value="ROC"/>
</dbReference>
<dbReference type="InterPro" id="IPR001245">
    <property type="entry name" value="Ser-Thr/Tyr_kinase_cat_dom"/>
</dbReference>
<dbReference type="InterPro" id="IPR051681">
    <property type="entry name" value="Ser/Thr_Kinases-Pseudokinases"/>
</dbReference>
<dbReference type="InterPro" id="IPR020635">
    <property type="entry name" value="Tyr_kinase_cat_dom"/>
</dbReference>
<dbReference type="InterPro" id="IPR015943">
    <property type="entry name" value="WD40/YVTN_repeat-like_dom_sf"/>
</dbReference>
<dbReference type="InterPro" id="IPR036322">
    <property type="entry name" value="WD40_repeat_dom_sf"/>
</dbReference>
<dbReference type="InterPro" id="IPR001680">
    <property type="entry name" value="WD40_rpt"/>
</dbReference>
<dbReference type="InterPro" id="IPR036388">
    <property type="entry name" value="WH-like_DNA-bd_sf"/>
</dbReference>
<dbReference type="PANTHER" id="PTHR44329">
    <property type="entry name" value="SERINE/THREONINE-PROTEIN KINASE TNNI3K-RELATED"/>
    <property type="match status" value="1"/>
</dbReference>
<dbReference type="Pfam" id="PF16095">
    <property type="entry name" value="COR-A"/>
    <property type="match status" value="1"/>
</dbReference>
<dbReference type="Pfam" id="PF25497">
    <property type="entry name" value="COR-B"/>
    <property type="match status" value="2"/>
</dbReference>
<dbReference type="Pfam" id="PF07714">
    <property type="entry name" value="PK_Tyr_Ser-Thr"/>
    <property type="match status" value="1"/>
</dbReference>
<dbReference type="Pfam" id="PF08477">
    <property type="entry name" value="Roc"/>
    <property type="match status" value="1"/>
</dbReference>
<dbReference type="SMART" id="SM00369">
    <property type="entry name" value="LRR_TYP"/>
    <property type="match status" value="2"/>
</dbReference>
<dbReference type="SMART" id="SM00219">
    <property type="entry name" value="TyrKc"/>
    <property type="match status" value="1"/>
</dbReference>
<dbReference type="SMART" id="SM00320">
    <property type="entry name" value="WD40"/>
    <property type="match status" value="5"/>
</dbReference>
<dbReference type="SUPFAM" id="SSF52058">
    <property type="entry name" value="L domain-like"/>
    <property type="match status" value="1"/>
</dbReference>
<dbReference type="SUPFAM" id="SSF52540">
    <property type="entry name" value="P-loop containing nucleoside triphosphate hydrolases"/>
    <property type="match status" value="1"/>
</dbReference>
<dbReference type="SUPFAM" id="SSF56112">
    <property type="entry name" value="Protein kinase-like (PK-like)"/>
    <property type="match status" value="1"/>
</dbReference>
<dbReference type="SUPFAM" id="SSF50978">
    <property type="entry name" value="WD40 repeat-like"/>
    <property type="match status" value="1"/>
</dbReference>
<dbReference type="PROSITE" id="PS51450">
    <property type="entry name" value="LRR"/>
    <property type="match status" value="3"/>
</dbReference>
<dbReference type="PROSITE" id="PS00107">
    <property type="entry name" value="PROTEIN_KINASE_ATP"/>
    <property type="match status" value="1"/>
</dbReference>
<dbReference type="PROSITE" id="PS50011">
    <property type="entry name" value="PROTEIN_KINASE_DOM"/>
    <property type="match status" value="1"/>
</dbReference>
<dbReference type="PROSITE" id="PS51424">
    <property type="entry name" value="ROC"/>
    <property type="match status" value="1"/>
</dbReference>
<dbReference type="PROSITE" id="PS50294">
    <property type="entry name" value="WD_REPEATS_REGION"/>
    <property type="match status" value="1"/>
</dbReference>
<proteinExistence type="evidence at protein level"/>
<gene>
    <name type="primary">roco4</name>
    <name type="ORF">DDB_G0288251</name>
</gene>
<organism>
    <name type="scientific">Dictyostelium discoideum</name>
    <name type="common">Social amoeba</name>
    <dbReference type="NCBI Taxonomy" id="44689"/>
    <lineage>
        <taxon>Eukaryota</taxon>
        <taxon>Amoebozoa</taxon>
        <taxon>Evosea</taxon>
        <taxon>Eumycetozoa</taxon>
        <taxon>Dictyostelia</taxon>
        <taxon>Dictyosteliales</taxon>
        <taxon>Dictyosteliaceae</taxon>
        <taxon>Dictyostelium</taxon>
    </lineage>
</organism>
<feature type="chain" id="PRO_0000355209" description="Probable serine/threonine-protein kinase roco4">
    <location>
        <begin position="1"/>
        <end position="1726"/>
    </location>
</feature>
<feature type="repeat" description="LRR 1">
    <location>
        <begin position="256"/>
        <end position="277"/>
    </location>
</feature>
<feature type="repeat" description="LRR 2">
    <location>
        <begin position="280"/>
        <end position="301"/>
    </location>
</feature>
<feature type="repeat" description="LRR 3">
    <location>
        <begin position="303"/>
        <end position="324"/>
    </location>
</feature>
<feature type="repeat" description="LRR 4">
    <location>
        <begin position="326"/>
        <end position="347"/>
    </location>
</feature>
<feature type="domain" description="Roc" evidence="3">
    <location>
        <begin position="364"/>
        <end position="544"/>
    </location>
</feature>
<feature type="domain" description="COR" evidence="1">
    <location>
        <begin position="591"/>
        <end position="787"/>
    </location>
</feature>
<feature type="domain" description="Protein kinase" evidence="2">
    <location>
        <begin position="1026"/>
        <end position="1292"/>
    </location>
</feature>
<feature type="repeat" description="WD 1">
    <location>
        <begin position="1422"/>
        <end position="1461"/>
    </location>
</feature>
<feature type="repeat" description="WD 2">
    <location>
        <begin position="1463"/>
        <end position="1502"/>
    </location>
</feature>
<feature type="repeat" description="WD 3">
    <location>
        <begin position="1506"/>
        <end position="1546"/>
    </location>
</feature>
<feature type="repeat" description="WD 4">
    <location>
        <begin position="1589"/>
        <end position="1627"/>
    </location>
</feature>
<feature type="repeat" description="WD 5">
    <location>
        <begin position="1633"/>
        <end position="1670"/>
    </location>
</feature>
<feature type="repeat" description="WD 6">
    <location>
        <begin position="1674"/>
        <end position="1714"/>
    </location>
</feature>
<feature type="region of interest" description="Disordered" evidence="4">
    <location>
        <begin position="800"/>
        <end position="890"/>
    </location>
</feature>
<feature type="region of interest" description="Disordered" evidence="4">
    <location>
        <begin position="1319"/>
        <end position="1385"/>
    </location>
</feature>
<feature type="compositionally biased region" description="Low complexity" evidence="4">
    <location>
        <begin position="800"/>
        <end position="881"/>
    </location>
</feature>
<feature type="compositionally biased region" description="Polar residues" evidence="4">
    <location>
        <begin position="1319"/>
        <end position="1331"/>
    </location>
</feature>
<feature type="compositionally biased region" description="Low complexity" evidence="4">
    <location>
        <begin position="1332"/>
        <end position="1348"/>
    </location>
</feature>
<feature type="compositionally biased region" description="Polar residues" evidence="4">
    <location>
        <begin position="1349"/>
        <end position="1364"/>
    </location>
</feature>
<feature type="compositionally biased region" description="Low complexity" evidence="4">
    <location>
        <begin position="1365"/>
        <end position="1381"/>
    </location>
</feature>
<feature type="active site" description="Proton acceptor" evidence="2">
    <location>
        <position position="1154"/>
    </location>
</feature>
<feature type="binding site" evidence="3">
    <location>
        <begin position="377"/>
        <end position="384"/>
    </location>
    <ligand>
        <name>GTP</name>
        <dbReference type="ChEBI" id="CHEBI:37565"/>
    </ligand>
</feature>
<feature type="binding site" evidence="3">
    <location>
        <begin position="428"/>
        <end position="432"/>
    </location>
    <ligand>
        <name>GTP</name>
        <dbReference type="ChEBI" id="CHEBI:37565"/>
    </ligand>
</feature>
<feature type="binding site" evidence="3">
    <location>
        <begin position="487"/>
        <end position="490"/>
    </location>
    <ligand>
        <name>GTP</name>
        <dbReference type="ChEBI" id="CHEBI:37565"/>
    </ligand>
</feature>
<feature type="binding site" evidence="2">
    <location>
        <begin position="1032"/>
        <end position="1040"/>
    </location>
    <ligand>
        <name>ATP</name>
        <dbReference type="ChEBI" id="CHEBI:30616"/>
    </ligand>
</feature>
<feature type="binding site" evidence="2">
    <location>
        <position position="1055"/>
    </location>
    <ligand>
        <name>ATP</name>
        <dbReference type="ChEBI" id="CHEBI:30616"/>
    </ligand>
</feature>
<feature type="turn" evidence="7">
    <location>
        <begin position="1023"/>
        <end position="1025"/>
    </location>
</feature>
<feature type="strand" evidence="9">
    <location>
        <begin position="1026"/>
        <end position="1034"/>
    </location>
</feature>
<feature type="strand" evidence="9">
    <location>
        <begin position="1036"/>
        <end position="1045"/>
    </location>
</feature>
<feature type="turn" evidence="9">
    <location>
        <begin position="1046"/>
        <end position="1048"/>
    </location>
</feature>
<feature type="strand" evidence="9">
    <location>
        <begin position="1051"/>
        <end position="1056"/>
    </location>
</feature>
<feature type="turn" evidence="6">
    <location>
        <begin position="1061"/>
        <end position="1063"/>
    </location>
</feature>
<feature type="helix" evidence="9">
    <location>
        <begin position="1067"/>
        <end position="1082"/>
    </location>
</feature>
<feature type="strand" evidence="9">
    <location>
        <begin position="1093"/>
        <end position="1097"/>
    </location>
</feature>
<feature type="turn" evidence="9">
    <location>
        <begin position="1098"/>
        <end position="1101"/>
    </location>
</feature>
<feature type="strand" evidence="9">
    <location>
        <begin position="1102"/>
        <end position="1105"/>
    </location>
</feature>
<feature type="helix" evidence="9">
    <location>
        <begin position="1113"/>
        <end position="1117"/>
    </location>
</feature>
<feature type="helix" evidence="9">
    <location>
        <begin position="1126"/>
        <end position="1144"/>
    </location>
</feature>
<feature type="strand" evidence="9">
    <location>
        <begin position="1146"/>
        <end position="1148"/>
    </location>
</feature>
<feature type="helix" evidence="9">
    <location>
        <begin position="1157"/>
        <end position="1159"/>
    </location>
</feature>
<feature type="strand" evidence="9">
    <location>
        <begin position="1160"/>
        <end position="1163"/>
    </location>
</feature>
<feature type="strand" evidence="9">
    <location>
        <begin position="1173"/>
        <end position="1175"/>
    </location>
</feature>
<feature type="strand" evidence="8">
    <location>
        <begin position="1182"/>
        <end position="1185"/>
    </location>
</feature>
<feature type="turn" evidence="9">
    <location>
        <begin position="1195"/>
        <end position="1197"/>
    </location>
</feature>
<feature type="helix" evidence="9">
    <location>
        <begin position="1200"/>
        <end position="1203"/>
    </location>
</feature>
<feature type="strand" evidence="9">
    <location>
        <begin position="1204"/>
        <end position="1206"/>
    </location>
</feature>
<feature type="helix" evidence="7">
    <location>
        <begin position="1207"/>
        <end position="1209"/>
    </location>
</feature>
<feature type="helix" evidence="9">
    <location>
        <begin position="1213"/>
        <end position="1228"/>
    </location>
</feature>
<feature type="turn" evidence="9">
    <location>
        <begin position="1232"/>
        <end position="1235"/>
    </location>
</feature>
<feature type="helix" evidence="9">
    <location>
        <begin position="1240"/>
        <end position="1249"/>
    </location>
</feature>
<feature type="helix" evidence="9">
    <location>
        <begin position="1262"/>
        <end position="1271"/>
    </location>
</feature>
<feature type="helix" evidence="9">
    <location>
        <begin position="1276"/>
        <end position="1278"/>
    </location>
</feature>
<feature type="helix" evidence="9">
    <location>
        <begin position="1282"/>
        <end position="1290"/>
    </location>
</feature>
<evidence type="ECO:0000255" key="1"/>
<evidence type="ECO:0000255" key="2">
    <source>
        <dbReference type="PROSITE-ProRule" id="PRU00159"/>
    </source>
</evidence>
<evidence type="ECO:0000255" key="3">
    <source>
        <dbReference type="PROSITE-ProRule" id="PRU00758"/>
    </source>
</evidence>
<evidence type="ECO:0000256" key="4">
    <source>
        <dbReference type="SAM" id="MobiDB-lite"/>
    </source>
</evidence>
<evidence type="ECO:0000305" key="5"/>
<evidence type="ECO:0007829" key="6">
    <source>
        <dbReference type="PDB" id="4F0F"/>
    </source>
</evidence>
<evidence type="ECO:0007829" key="7">
    <source>
        <dbReference type="PDB" id="4F0G"/>
    </source>
</evidence>
<evidence type="ECO:0007829" key="8">
    <source>
        <dbReference type="PDB" id="4F1T"/>
    </source>
</evidence>
<evidence type="ECO:0007829" key="9">
    <source>
        <dbReference type="PDB" id="4YZN"/>
    </source>
</evidence>
<keyword id="KW-0002">3D-structure</keyword>
<keyword id="KW-0067">ATP-binding</keyword>
<keyword id="KW-0342">GTP-binding</keyword>
<keyword id="KW-0418">Kinase</keyword>
<keyword id="KW-0433">Leucine-rich repeat</keyword>
<keyword id="KW-0547">Nucleotide-binding</keyword>
<keyword id="KW-1185">Reference proteome</keyword>
<keyword id="KW-0677">Repeat</keyword>
<keyword id="KW-0723">Serine/threonine-protein kinase</keyword>
<keyword id="KW-0808">Transferase</keyword>
<keyword id="KW-0853">WD repeat</keyword>